<reference key="1">
    <citation type="journal article" date="2010" name="J. Plant Physiol.">
        <title>NAM-1gene polymorphism and grain protein content in Hordeum.</title>
        <authorList>
            <person name="Jamar C."/>
            <person name="Loffet F."/>
            <person name="Frettinger P."/>
            <person name="Ramsay L."/>
            <person name="Fauconnier M.L."/>
            <person name="du Jardin P."/>
        </authorList>
    </citation>
    <scope>NUCLEOTIDE SEQUENCE [GENOMIC DNA]</scope>
    <scope>FUNCTION</scope>
</reference>
<dbReference type="EMBL" id="EU908210">
    <property type="protein sequence ID" value="ACL31422.1"/>
    <property type="molecule type" value="Genomic_DNA"/>
</dbReference>
<dbReference type="SMR" id="D2SMN4"/>
<dbReference type="GO" id="GO:0005634">
    <property type="term" value="C:nucleus"/>
    <property type="evidence" value="ECO:0007669"/>
    <property type="project" value="UniProtKB-SubCell"/>
</dbReference>
<dbReference type="GO" id="GO:0003677">
    <property type="term" value="F:DNA binding"/>
    <property type="evidence" value="ECO:0007669"/>
    <property type="project" value="UniProtKB-KW"/>
</dbReference>
<dbReference type="GO" id="GO:0006355">
    <property type="term" value="P:regulation of DNA-templated transcription"/>
    <property type="evidence" value="ECO:0007669"/>
    <property type="project" value="InterPro"/>
</dbReference>
<dbReference type="GO" id="GO:0048731">
    <property type="term" value="P:system development"/>
    <property type="evidence" value="ECO:0007669"/>
    <property type="project" value="TreeGrafter"/>
</dbReference>
<dbReference type="FunFam" id="2.170.150.80:FF:000005">
    <property type="entry name" value="NAC transcription factor 56"/>
    <property type="match status" value="1"/>
</dbReference>
<dbReference type="Gene3D" id="2.170.150.80">
    <property type="entry name" value="NAC domain"/>
    <property type="match status" value="1"/>
</dbReference>
<dbReference type="InterPro" id="IPR003441">
    <property type="entry name" value="NAC-dom"/>
</dbReference>
<dbReference type="InterPro" id="IPR036093">
    <property type="entry name" value="NAC_dom_sf"/>
</dbReference>
<dbReference type="PANTHER" id="PTHR31719">
    <property type="entry name" value="NAC TRANSCRIPTION FACTOR 56"/>
    <property type="match status" value="1"/>
</dbReference>
<dbReference type="PANTHER" id="PTHR31719:SF149">
    <property type="entry name" value="NAC TRANSCRIPTION FACTOR NAM-2"/>
    <property type="match status" value="1"/>
</dbReference>
<dbReference type="Pfam" id="PF02365">
    <property type="entry name" value="NAM"/>
    <property type="match status" value="1"/>
</dbReference>
<dbReference type="SUPFAM" id="SSF101941">
    <property type="entry name" value="NAC domain"/>
    <property type="match status" value="1"/>
</dbReference>
<dbReference type="PROSITE" id="PS51005">
    <property type="entry name" value="NAC"/>
    <property type="match status" value="1"/>
</dbReference>
<proteinExistence type="predicted"/>
<accession>D2SMN4</accession>
<protein>
    <recommendedName>
        <fullName>NAC transcription factor NAM-B1</fullName>
    </recommendedName>
</protein>
<sequence length="406" mass="43517">MGSPDSSSGSAQKPPRHQHQHQPPPPRRQGSAPELPPGFRFHPTDEELVVHYLKKKAAKAPLPVTIIAEVDLYKFDPWELPEKATFGEHEWYFFSPRDRKYPNGARPNRAATSGYWKATGTDKPILASATGCGREKVGVKKALVFYRGKPPRGLKTNWIMHEYRLTGASAGSTTTSRPPPVTGGSRAPASLRLDDWVLCRIYKKTSKAAAAVGDEQRSMECEDSVEDAVTAYPPYATAGMAGAGAHGSNYVQLLHHHDSHEDNFQLDGLLTEHDVGLSAGAASLGHLAAAARATKQFLAPSSSTPFNWLEASTGGSILPQARNFPGFNRSRNVGSMSLSSTADDMAGAVDVSDGGNAVNAMYLPVQDGTYHQHVILGAPLAPEAIAGAATSGFQHHVQISGVNWNP</sequence>
<name>NAMB1_HORVS</name>
<organism>
    <name type="scientific">Hordeum vulgare subsp. spontaneum</name>
    <name type="common">Wild barley</name>
    <name type="synonym">Hordeum spontaneum</name>
    <dbReference type="NCBI Taxonomy" id="77009"/>
    <lineage>
        <taxon>Eukaryota</taxon>
        <taxon>Viridiplantae</taxon>
        <taxon>Streptophyta</taxon>
        <taxon>Embryophyta</taxon>
        <taxon>Tracheophyta</taxon>
        <taxon>Spermatophyta</taxon>
        <taxon>Magnoliopsida</taxon>
        <taxon>Liliopsida</taxon>
        <taxon>Poales</taxon>
        <taxon>Poaceae</taxon>
        <taxon>BOP clade</taxon>
        <taxon>Pooideae</taxon>
        <taxon>Triticodae</taxon>
        <taxon>Triticeae</taxon>
        <taxon>Hordeinae</taxon>
        <taxon>Hordeum</taxon>
    </lineage>
</organism>
<keyword id="KW-0238">DNA-binding</keyword>
<keyword id="KW-0539">Nucleus</keyword>
<keyword id="KW-0804">Transcription</keyword>
<keyword id="KW-0805">Transcription regulation</keyword>
<gene>
    <name type="primary">NAM-B1</name>
</gene>
<comment type="function">
    <text evidence="3">Transcription factor of the NAC family associated with the grain protein content (GPC). Sequences of the 11 European varieties of H.vulgare tested belongs to the same haplotype while the sequence found in H.spontaneum, an ancestor of the cultivated H.vulgare which has a higher GPC, belongs to an other haplotype.</text>
</comment>
<comment type="subcellular location">
    <subcellularLocation>
        <location evidence="4">Nucleus</location>
    </subcellularLocation>
</comment>
<comment type="domain">
    <text>The NAC domain includes a DNA-binding domain and a dimerization domain.</text>
</comment>
<comment type="miscellaneous">
    <text>High grain protein content (GPC) is a desirable trait in breadmaking and pasta wheat varieties because of its positive effects on quality and nutritional value while Low GPC is a desirable trait for barley malt and beer production.</text>
</comment>
<evidence type="ECO:0000255" key="1">
    <source>
        <dbReference type="PROSITE-ProRule" id="PRU00353"/>
    </source>
</evidence>
<evidence type="ECO:0000256" key="2">
    <source>
        <dbReference type="SAM" id="MobiDB-lite"/>
    </source>
</evidence>
<evidence type="ECO:0000269" key="3">
    <source>
    </source>
</evidence>
<evidence type="ECO:0000305" key="4"/>
<feature type="chain" id="PRO_0000420374" description="NAC transcription factor NAM-B1">
    <location>
        <begin position="1"/>
        <end position="406"/>
    </location>
</feature>
<feature type="domain" description="NAC" evidence="1">
    <location>
        <begin position="35"/>
        <end position="204"/>
    </location>
</feature>
<feature type="DNA-binding region" evidence="1">
    <location>
        <begin position="137"/>
        <end position="210"/>
    </location>
</feature>
<feature type="region of interest" description="Disordered" evidence="2">
    <location>
        <begin position="1"/>
        <end position="40"/>
    </location>
</feature>
<feature type="compositionally biased region" description="Polar residues" evidence="2">
    <location>
        <begin position="1"/>
        <end position="11"/>
    </location>
</feature>